<comment type="function">
    <text evidence="1">Catalyzes the radical-mediated synthesis of 5-amino-5-(4-hydroxybenzyl)-6-(D-ribitylimino)-5,6-dihydrouracil from 5-amino-6-(D-ribitylamino)uracil and L-tyrosine.</text>
</comment>
<comment type="catalytic activity">
    <reaction evidence="1">
        <text>5-amino-6-(D-ribitylamino)uracil + L-tyrosine + S-adenosyl-L-methionine = 5-amino-5-(4-hydroxybenzyl)-6-(D-ribitylimino)-5,6-dihydrouracil + 2-iminoacetate + 5'-deoxyadenosine + L-methionine + H(+)</text>
        <dbReference type="Rhea" id="RHEA:55200"/>
        <dbReference type="ChEBI" id="CHEBI:15378"/>
        <dbReference type="ChEBI" id="CHEBI:15934"/>
        <dbReference type="ChEBI" id="CHEBI:17319"/>
        <dbReference type="ChEBI" id="CHEBI:57844"/>
        <dbReference type="ChEBI" id="CHEBI:58315"/>
        <dbReference type="ChEBI" id="CHEBI:59789"/>
        <dbReference type="ChEBI" id="CHEBI:77846"/>
        <dbReference type="ChEBI" id="CHEBI:85936"/>
        <dbReference type="EC" id="2.5.1.147"/>
    </reaction>
</comment>
<comment type="cofactor">
    <cofactor evidence="1">
        <name>[4Fe-4S] cluster</name>
        <dbReference type="ChEBI" id="CHEBI:49883"/>
    </cofactor>
    <text evidence="1">Binds 1 [4Fe-4S] cluster. The cluster is coordinated with 3 cysteines and an exchangeable S-adenosyl-L-methionine.</text>
</comment>
<comment type="pathway">
    <text evidence="1">Cofactor biosynthesis; coenzyme F0 biosynthesis.</text>
</comment>
<comment type="subunit">
    <text evidence="1">Consists of two subunits, CofG and CofH.</text>
</comment>
<comment type="similarity">
    <text evidence="1">Belongs to the radical SAM superfamily. CofH family.</text>
</comment>
<sequence>MDLMSFKEKELSKKDCVELFEDTENFFDILKLADSLRKDIVGDTVTYVVNANINFTNVCSGTCKFCAFKAEHGDPNAFFLSPEQVAKKALEARKTGATEVCIQGGLLKEIDTYFQAEILKKVKEITKTYGGIDVHAFSPMEVKSAAENAGLSVKEALKILKENGLNSMPGTAAEILDDEVRSEICPTKLKTSEWIDVVSTAHKTGINTTCTMMYGHIEENKHLAEHLSILRKIQKETGGFTEFVPLTFLHENAPLHHMDRVKSGASGMLDLKVYAISRIFFKDYIKNIQTSWVKLGTKLSQISLNCGANDIGGTLMEESISKAAGGSYGTYMSEEKLKDMVLAVGRIPKQRNTCYEIIE</sequence>
<proteinExistence type="inferred from homology"/>
<evidence type="ECO:0000255" key="1">
    <source>
        <dbReference type="HAMAP-Rule" id="MF_01612"/>
    </source>
</evidence>
<evidence type="ECO:0000255" key="2">
    <source>
        <dbReference type="PROSITE-ProRule" id="PRU01266"/>
    </source>
</evidence>
<feature type="chain" id="PRO_0000141722" description="5-amino-6-(D-ribitylamino)uracil--L-tyrosine 4-hydroxyphenyl transferase 1">
    <location>
        <begin position="1"/>
        <end position="359"/>
    </location>
</feature>
<feature type="domain" description="Radical SAM core" evidence="2">
    <location>
        <begin position="45"/>
        <end position="282"/>
    </location>
</feature>
<feature type="binding site" evidence="1">
    <location>
        <position position="59"/>
    </location>
    <ligand>
        <name>[4Fe-4S] cluster</name>
        <dbReference type="ChEBI" id="CHEBI:49883"/>
        <note>4Fe-4S-S-AdoMet</note>
    </ligand>
</feature>
<feature type="binding site" evidence="1">
    <location>
        <position position="63"/>
    </location>
    <ligand>
        <name>[4Fe-4S] cluster</name>
        <dbReference type="ChEBI" id="CHEBI:49883"/>
        <note>4Fe-4S-S-AdoMet</note>
    </ligand>
</feature>
<feature type="binding site" evidence="1">
    <location>
        <position position="66"/>
    </location>
    <ligand>
        <name>[4Fe-4S] cluster</name>
        <dbReference type="ChEBI" id="CHEBI:49883"/>
        <note>4Fe-4S-S-AdoMet</note>
    </ligand>
</feature>
<dbReference type="EC" id="2.5.1.147" evidence="1"/>
<dbReference type="EMBL" id="BX950229">
    <property type="protein sequence ID" value="CAF29612.1"/>
    <property type="molecule type" value="Genomic_DNA"/>
</dbReference>
<dbReference type="RefSeq" id="WP_011170000.1">
    <property type="nucleotide sequence ID" value="NC_005791.1"/>
</dbReference>
<dbReference type="SMR" id="Q6M161"/>
<dbReference type="STRING" id="267377.MMP0056"/>
<dbReference type="EnsemblBacteria" id="CAF29612">
    <property type="protein sequence ID" value="CAF29612"/>
    <property type="gene ID" value="MMP0056"/>
</dbReference>
<dbReference type="GeneID" id="2761471"/>
<dbReference type="KEGG" id="mmp:MMP0056"/>
<dbReference type="PATRIC" id="fig|267377.15.peg.57"/>
<dbReference type="eggNOG" id="arCOG00656">
    <property type="taxonomic scope" value="Archaea"/>
</dbReference>
<dbReference type="HOGENOM" id="CLU_040406_1_0_2"/>
<dbReference type="OrthoDB" id="8186at2157"/>
<dbReference type="UniPathway" id="UPA00072"/>
<dbReference type="Proteomes" id="UP000000590">
    <property type="component" value="Chromosome"/>
</dbReference>
<dbReference type="GO" id="GO:0051539">
    <property type="term" value="F:4 iron, 4 sulfur cluster binding"/>
    <property type="evidence" value="ECO:0007669"/>
    <property type="project" value="UniProtKB-KW"/>
</dbReference>
<dbReference type="GO" id="GO:0141093">
    <property type="term" value="F:5-amino-6-(D-ribitylamino)uracil--L-tyrosine 4-hydroxyphenyl transferase activity"/>
    <property type="evidence" value="ECO:0007669"/>
    <property type="project" value="UniProtKB-EC"/>
</dbReference>
<dbReference type="GO" id="GO:0044689">
    <property type="term" value="F:7,8-didemethyl-8-hydroxy-5-deazariboflavin synthase activity"/>
    <property type="evidence" value="ECO:0007669"/>
    <property type="project" value="TreeGrafter"/>
</dbReference>
<dbReference type="GO" id="GO:0005506">
    <property type="term" value="F:iron ion binding"/>
    <property type="evidence" value="ECO:0007669"/>
    <property type="project" value="UniProtKB-UniRule"/>
</dbReference>
<dbReference type="CDD" id="cd01335">
    <property type="entry name" value="Radical_SAM"/>
    <property type="match status" value="1"/>
</dbReference>
<dbReference type="FunFam" id="3.20.20.70:FF:000134">
    <property type="entry name" value="7,8-didemethyl-8-hydroxy-5-deazariboflavin synthase"/>
    <property type="match status" value="1"/>
</dbReference>
<dbReference type="Gene3D" id="3.20.20.70">
    <property type="entry name" value="Aldolase class I"/>
    <property type="match status" value="1"/>
</dbReference>
<dbReference type="HAMAP" id="MF_01612">
    <property type="entry name" value="FO_synth_sub2"/>
    <property type="match status" value="1"/>
</dbReference>
<dbReference type="InterPro" id="IPR013785">
    <property type="entry name" value="Aldolase_TIM"/>
</dbReference>
<dbReference type="InterPro" id="IPR045567">
    <property type="entry name" value="CofH/MnqC-like_C"/>
</dbReference>
<dbReference type="InterPro" id="IPR019940">
    <property type="entry name" value="CofH_family"/>
</dbReference>
<dbReference type="InterPro" id="IPR006638">
    <property type="entry name" value="Elp3/MiaA/NifB-like_rSAM"/>
</dbReference>
<dbReference type="InterPro" id="IPR034405">
    <property type="entry name" value="F420"/>
</dbReference>
<dbReference type="InterPro" id="IPR020050">
    <property type="entry name" value="FO_synthase_su2"/>
</dbReference>
<dbReference type="InterPro" id="IPR007197">
    <property type="entry name" value="rSAM"/>
</dbReference>
<dbReference type="NCBIfam" id="TIGR00423">
    <property type="entry name" value="CofH family radical SAM protein"/>
    <property type="match status" value="1"/>
</dbReference>
<dbReference type="NCBIfam" id="TIGR03551">
    <property type="entry name" value="F420_cofH"/>
    <property type="match status" value="1"/>
</dbReference>
<dbReference type="NCBIfam" id="NF005609">
    <property type="entry name" value="PRK07360.1"/>
    <property type="match status" value="1"/>
</dbReference>
<dbReference type="PANTHER" id="PTHR43076">
    <property type="entry name" value="FO SYNTHASE (COFH)"/>
    <property type="match status" value="1"/>
</dbReference>
<dbReference type="PANTHER" id="PTHR43076:SF1">
    <property type="entry name" value="LIPOYL SYNTHASE 2"/>
    <property type="match status" value="1"/>
</dbReference>
<dbReference type="Pfam" id="PF19288">
    <property type="entry name" value="CofH_C"/>
    <property type="match status" value="1"/>
</dbReference>
<dbReference type="Pfam" id="PF04055">
    <property type="entry name" value="Radical_SAM"/>
    <property type="match status" value="1"/>
</dbReference>
<dbReference type="PIRSF" id="PIRSF004762">
    <property type="entry name" value="CHP00423"/>
    <property type="match status" value="1"/>
</dbReference>
<dbReference type="SFLD" id="SFLDF00293">
    <property type="entry name" value="((2_3_4_5-tetrahydroxypentyl)a"/>
    <property type="match status" value="1"/>
</dbReference>
<dbReference type="SFLD" id="SFLDG01388">
    <property type="entry name" value="7_8-didemethyl-8-hydroxy-5-dea"/>
    <property type="match status" value="1"/>
</dbReference>
<dbReference type="SFLD" id="SFLDF00343">
    <property type="entry name" value="aminofutalosine_synthase_(mqnE"/>
    <property type="match status" value="1"/>
</dbReference>
<dbReference type="SMART" id="SM00729">
    <property type="entry name" value="Elp3"/>
    <property type="match status" value="1"/>
</dbReference>
<dbReference type="SUPFAM" id="SSF102114">
    <property type="entry name" value="Radical SAM enzymes"/>
    <property type="match status" value="1"/>
</dbReference>
<dbReference type="PROSITE" id="PS51918">
    <property type="entry name" value="RADICAL_SAM"/>
    <property type="match status" value="1"/>
</dbReference>
<reference key="1">
    <citation type="journal article" date="2004" name="J. Bacteriol.">
        <title>Complete genome sequence of the genetically tractable hydrogenotrophic methanogen Methanococcus maripaludis.</title>
        <authorList>
            <person name="Hendrickson E.L."/>
            <person name="Kaul R."/>
            <person name="Zhou Y."/>
            <person name="Bovee D."/>
            <person name="Chapman P."/>
            <person name="Chung J."/>
            <person name="Conway de Macario E."/>
            <person name="Dodsworth J.A."/>
            <person name="Gillett W."/>
            <person name="Graham D.E."/>
            <person name="Hackett M."/>
            <person name="Haydock A.K."/>
            <person name="Kang A."/>
            <person name="Land M.L."/>
            <person name="Levy R."/>
            <person name="Lie T.J."/>
            <person name="Major T.A."/>
            <person name="Moore B.C."/>
            <person name="Porat I."/>
            <person name="Palmeiri A."/>
            <person name="Rouse G."/>
            <person name="Saenphimmachak C."/>
            <person name="Soell D."/>
            <person name="Van Dien S."/>
            <person name="Wang T."/>
            <person name="Whitman W.B."/>
            <person name="Xia Q."/>
            <person name="Zhang Y."/>
            <person name="Larimer F.W."/>
            <person name="Olson M.V."/>
            <person name="Leigh J.A."/>
        </authorList>
    </citation>
    <scope>NUCLEOTIDE SEQUENCE [LARGE SCALE GENOMIC DNA]</scope>
    <source>
        <strain>DSM 14266 / JCM 13030 / NBRC 101832 / S2 / LL</strain>
    </source>
</reference>
<organism>
    <name type="scientific">Methanococcus maripaludis (strain DSM 14266 / JCM 13030 / NBRC 101832 / S2 / LL)</name>
    <dbReference type="NCBI Taxonomy" id="267377"/>
    <lineage>
        <taxon>Archaea</taxon>
        <taxon>Methanobacteriati</taxon>
        <taxon>Methanobacteriota</taxon>
        <taxon>Methanomada group</taxon>
        <taxon>Methanococci</taxon>
        <taxon>Methanococcales</taxon>
        <taxon>Methanococcaceae</taxon>
        <taxon>Methanococcus</taxon>
    </lineage>
</organism>
<name>COFH1_METMP</name>
<protein>
    <recommendedName>
        <fullName evidence="1">5-amino-6-(D-ribitylamino)uracil--L-tyrosine 4-hydroxyphenyl transferase 1</fullName>
        <ecNumber evidence="1">2.5.1.147</ecNumber>
    </recommendedName>
    <alternativeName>
        <fullName evidence="1">FO synthase subunit 2 1</fullName>
    </alternativeName>
</protein>
<gene>
    <name evidence="1" type="primary">cofH1</name>
    <name type="ordered locus">MMP0056</name>
</gene>
<keyword id="KW-0004">4Fe-4S</keyword>
<keyword id="KW-0408">Iron</keyword>
<keyword id="KW-0411">Iron-sulfur</keyword>
<keyword id="KW-0479">Metal-binding</keyword>
<keyword id="KW-1185">Reference proteome</keyword>
<keyword id="KW-0949">S-adenosyl-L-methionine</keyword>
<keyword id="KW-0808">Transferase</keyword>
<accession>Q6M161</accession>